<keyword id="KW-0963">Cytoplasm</keyword>
<keyword id="KW-0276">Fatty acid metabolism</keyword>
<keyword id="KW-0443">Lipid metabolism</keyword>
<keyword id="KW-0520">NAD</keyword>
<keyword id="KW-0560">Oxidoreductase</keyword>
<keyword id="KW-0644">Prostaglandin metabolism</keyword>
<keyword id="KW-1185">Reference proteome</keyword>
<keyword id="KW-0043">Tumor suppressor</keyword>
<evidence type="ECO:0000250" key="1"/>
<evidence type="ECO:0000250" key="2">
    <source>
        <dbReference type="UniProtKB" id="P15428"/>
    </source>
</evidence>
<evidence type="ECO:0000255" key="3">
    <source>
        <dbReference type="PROSITE-ProRule" id="PRU10001"/>
    </source>
</evidence>
<evidence type="ECO:0000305" key="4"/>
<gene>
    <name type="primary">HPGD</name>
    <name type="synonym">PGDH1</name>
</gene>
<proteinExistence type="evidence at transcript level"/>
<feature type="chain" id="PRO_0000054745" description="15-hydroxyprostaglandin dehydrogenase [NAD(+)]">
    <location>
        <begin position="1"/>
        <end position="266"/>
    </location>
</feature>
<feature type="active site" description="Proton acceptor" evidence="3">
    <location>
        <position position="151"/>
    </location>
</feature>
<feature type="binding site" evidence="1">
    <location>
        <begin position="12"/>
        <end position="20"/>
    </location>
    <ligand>
        <name>NAD(+)</name>
        <dbReference type="ChEBI" id="CHEBI:57540"/>
    </ligand>
</feature>
<feature type="binding site" evidence="1">
    <location>
        <begin position="36"/>
        <end position="37"/>
    </location>
    <ligand>
        <name>NAD(+)</name>
        <dbReference type="ChEBI" id="CHEBI:57540"/>
    </ligand>
</feature>
<feature type="binding site" evidence="1">
    <location>
        <begin position="63"/>
        <end position="65"/>
    </location>
    <ligand>
        <name>NAD(+)</name>
        <dbReference type="ChEBI" id="CHEBI:57540"/>
    </ligand>
</feature>
<feature type="binding site" evidence="1">
    <location>
        <position position="91"/>
    </location>
    <ligand>
        <name>NAD(+)</name>
        <dbReference type="ChEBI" id="CHEBI:57540"/>
    </ligand>
</feature>
<feature type="binding site" evidence="1">
    <location>
        <position position="138"/>
    </location>
    <ligand>
        <name>substrate</name>
    </ligand>
</feature>
<feature type="binding site" evidence="1">
    <location>
        <position position="148"/>
    </location>
    <ligand>
        <name>substrate</name>
    </ligand>
</feature>
<feature type="binding site" evidence="1">
    <location>
        <begin position="151"/>
        <end position="155"/>
    </location>
    <ligand>
        <name>NAD(+)</name>
        <dbReference type="ChEBI" id="CHEBI:57540"/>
    </ligand>
</feature>
<feature type="binding site" evidence="1">
    <location>
        <begin position="186"/>
        <end position="188"/>
    </location>
    <ligand>
        <name>NAD(+)</name>
        <dbReference type="ChEBI" id="CHEBI:57540"/>
    </ligand>
</feature>
<organism>
    <name type="scientific">Macaca fascicularis</name>
    <name type="common">Crab-eating macaque</name>
    <name type="synonym">Cynomolgus monkey</name>
    <dbReference type="NCBI Taxonomy" id="9541"/>
    <lineage>
        <taxon>Eukaryota</taxon>
        <taxon>Metazoa</taxon>
        <taxon>Chordata</taxon>
        <taxon>Craniata</taxon>
        <taxon>Vertebrata</taxon>
        <taxon>Euteleostomi</taxon>
        <taxon>Mammalia</taxon>
        <taxon>Eutheria</taxon>
        <taxon>Euarchontoglires</taxon>
        <taxon>Primates</taxon>
        <taxon>Haplorrhini</taxon>
        <taxon>Catarrhini</taxon>
        <taxon>Cercopithecidae</taxon>
        <taxon>Cercopithecinae</taxon>
        <taxon>Macaca</taxon>
    </lineage>
</organism>
<dbReference type="EC" id="1.1.1.141" evidence="2"/>
<dbReference type="EC" id="1.1.1.-" evidence="2"/>
<dbReference type="EC" id="1.1.1.232" evidence="2"/>
<dbReference type="EMBL" id="AB059653">
    <property type="protein sequence ID" value="BAB97215.1"/>
    <property type="molecule type" value="mRNA"/>
</dbReference>
<dbReference type="RefSeq" id="XP_045249007.1">
    <property type="nucleotide sequence ID" value="XM_045393072.2"/>
</dbReference>
<dbReference type="SMR" id="Q8MJY8"/>
<dbReference type="STRING" id="9541.ENSMFAP00000040924"/>
<dbReference type="Ensembl" id="ENSMFAT00000015196.2">
    <property type="protein sequence ID" value="ENSMFAP00000040924.1"/>
    <property type="gene ID" value="ENSMFAG00000041220.2"/>
</dbReference>
<dbReference type="GeneID" id="102140664"/>
<dbReference type="VEuPathDB" id="HostDB:ENSMFAG00000041220"/>
<dbReference type="eggNOG" id="KOG4169">
    <property type="taxonomic scope" value="Eukaryota"/>
</dbReference>
<dbReference type="GeneTree" id="ENSGT00940000154593"/>
<dbReference type="Proteomes" id="UP000233100">
    <property type="component" value="Chromosome 5"/>
</dbReference>
<dbReference type="Bgee" id="ENSMFAG00000041220">
    <property type="expression patterns" value="Expressed in lung and 10 other cell types or tissues"/>
</dbReference>
<dbReference type="GO" id="GO:0016323">
    <property type="term" value="C:basolateral plasma membrane"/>
    <property type="evidence" value="ECO:0007669"/>
    <property type="project" value="Ensembl"/>
</dbReference>
<dbReference type="GO" id="GO:0005737">
    <property type="term" value="C:cytoplasm"/>
    <property type="evidence" value="ECO:0000314"/>
    <property type="project" value="UniProtKB"/>
</dbReference>
<dbReference type="GO" id="GO:0005829">
    <property type="term" value="C:cytosol"/>
    <property type="evidence" value="ECO:0007669"/>
    <property type="project" value="Ensembl"/>
</dbReference>
<dbReference type="GO" id="GO:0005654">
    <property type="term" value="C:nucleoplasm"/>
    <property type="evidence" value="ECO:0007669"/>
    <property type="project" value="Ensembl"/>
</dbReference>
<dbReference type="GO" id="GO:0016404">
    <property type="term" value="F:15-hydroxyprostaglandin dehydrogenase (NAD+) activity"/>
    <property type="evidence" value="ECO:0000250"/>
    <property type="project" value="UniProtKB"/>
</dbReference>
<dbReference type="GO" id="GO:0042802">
    <property type="term" value="F:identical protein binding"/>
    <property type="evidence" value="ECO:0007669"/>
    <property type="project" value="Ensembl"/>
</dbReference>
<dbReference type="GO" id="GO:0051287">
    <property type="term" value="F:NAD binding"/>
    <property type="evidence" value="ECO:0000250"/>
    <property type="project" value="UniProtKB"/>
</dbReference>
<dbReference type="GO" id="GO:0070403">
    <property type="term" value="F:NAD+ binding"/>
    <property type="evidence" value="ECO:0000250"/>
    <property type="project" value="UniProtKB"/>
</dbReference>
<dbReference type="GO" id="GO:0016616">
    <property type="term" value="F:oxidoreductase activity, acting on the CH-OH group of donors, NAD or NADP as acceptor"/>
    <property type="evidence" value="ECO:0000250"/>
    <property type="project" value="UniProtKB"/>
</dbReference>
<dbReference type="GO" id="GO:0004957">
    <property type="term" value="F:prostaglandin E receptor activity"/>
    <property type="evidence" value="ECO:0000250"/>
    <property type="project" value="UniProtKB"/>
</dbReference>
<dbReference type="GO" id="GO:0097070">
    <property type="term" value="P:ductus arteriosus closure"/>
    <property type="evidence" value="ECO:0000250"/>
    <property type="project" value="UniProtKB"/>
</dbReference>
<dbReference type="GO" id="GO:0007565">
    <property type="term" value="P:female pregnancy"/>
    <property type="evidence" value="ECO:0000250"/>
    <property type="project" value="UniProtKB"/>
</dbReference>
<dbReference type="GO" id="GO:0045786">
    <property type="term" value="P:negative regulation of cell cycle"/>
    <property type="evidence" value="ECO:0000250"/>
    <property type="project" value="UniProtKB"/>
</dbReference>
<dbReference type="GO" id="GO:0030728">
    <property type="term" value="P:ovulation"/>
    <property type="evidence" value="ECO:0000270"/>
    <property type="project" value="UniProtKB"/>
</dbReference>
<dbReference type="GO" id="GO:0007567">
    <property type="term" value="P:parturition"/>
    <property type="evidence" value="ECO:0000250"/>
    <property type="project" value="UniProtKB"/>
</dbReference>
<dbReference type="GO" id="GO:0006693">
    <property type="term" value="P:prostaglandin metabolic process"/>
    <property type="evidence" value="ECO:0000250"/>
    <property type="project" value="UniProtKB"/>
</dbReference>
<dbReference type="GO" id="GO:1905828">
    <property type="term" value="P:regulation of prostaglandin catabolic process"/>
    <property type="evidence" value="ECO:0000250"/>
    <property type="project" value="UniProtKB"/>
</dbReference>
<dbReference type="GO" id="GO:0070493">
    <property type="term" value="P:thrombin-activated receptor signaling pathway"/>
    <property type="evidence" value="ECO:0000250"/>
    <property type="project" value="UniProtKB"/>
</dbReference>
<dbReference type="GO" id="GO:0007179">
    <property type="term" value="P:transforming growth factor beta receptor signaling pathway"/>
    <property type="evidence" value="ECO:0000250"/>
    <property type="project" value="UniProtKB"/>
</dbReference>
<dbReference type="CDD" id="cd05323">
    <property type="entry name" value="ADH_SDR_c_like"/>
    <property type="match status" value="1"/>
</dbReference>
<dbReference type="FunFam" id="3.40.50.720:FF:000149">
    <property type="entry name" value="15-hydroxyprostaglandin dehydrogenase [NAD(+)]"/>
    <property type="match status" value="1"/>
</dbReference>
<dbReference type="Gene3D" id="3.40.50.720">
    <property type="entry name" value="NAD(P)-binding Rossmann-like Domain"/>
    <property type="match status" value="1"/>
</dbReference>
<dbReference type="InterPro" id="IPR036291">
    <property type="entry name" value="NAD(P)-bd_dom_sf"/>
</dbReference>
<dbReference type="InterPro" id="IPR020904">
    <property type="entry name" value="Sc_DH/Rdtase_CS"/>
</dbReference>
<dbReference type="InterPro" id="IPR002347">
    <property type="entry name" value="SDR_fam"/>
</dbReference>
<dbReference type="PANTHER" id="PTHR44229">
    <property type="entry name" value="15-HYDROXYPROSTAGLANDIN DEHYDROGENASE [NAD(+)]"/>
    <property type="match status" value="1"/>
</dbReference>
<dbReference type="PANTHER" id="PTHR44229:SF4">
    <property type="entry name" value="15-HYDROXYPROSTAGLANDIN DEHYDROGENASE [NAD(+)]"/>
    <property type="match status" value="1"/>
</dbReference>
<dbReference type="Pfam" id="PF00106">
    <property type="entry name" value="adh_short"/>
    <property type="match status" value="1"/>
</dbReference>
<dbReference type="PRINTS" id="PR00081">
    <property type="entry name" value="GDHRDH"/>
</dbReference>
<dbReference type="PRINTS" id="PR00080">
    <property type="entry name" value="SDRFAMILY"/>
</dbReference>
<dbReference type="SUPFAM" id="SSF51735">
    <property type="entry name" value="NAD(P)-binding Rossmann-fold domains"/>
    <property type="match status" value="1"/>
</dbReference>
<dbReference type="PROSITE" id="PS00061">
    <property type="entry name" value="ADH_SHORT"/>
    <property type="match status" value="1"/>
</dbReference>
<name>PGDH_MACFA</name>
<protein>
    <recommendedName>
        <fullName>15-hydroxyprostaglandin dehydrogenase [NAD(+)]</fullName>
        <shortName>15-PGDH</shortName>
        <ecNumber evidence="2">1.1.1.141</ecNumber>
    </recommendedName>
    <alternativeName>
        <fullName>Eicosanoid/docosanoid dehydrogenase [NAD(+)]</fullName>
        <ecNumber evidence="2">1.1.1.-</ecNumber>
        <ecNumber evidence="2">1.1.1.232</ecNumber>
    </alternativeName>
    <alternativeName>
        <fullName>Prostaglandin dehydrogenase 1</fullName>
    </alternativeName>
</protein>
<accession>Q8MJY8</accession>
<sequence>MHVNGKVALVTGAAQGIGRAFAEALLLKGAKVALVDWNLEAGVQCKAALDEKFEPQKTLFIQCDVADQQQLRDTFRKVVDHFGRLDILVNNAGVNNEKNWEKTLQINLVSVISGTYLGLDYMSKQNGGEGGIIINMSSLAGLMPVAQQPVYCASKHGIVGFTRSAALAANLMNSGVRLNAICPGFVNTAILESIEKEENMGQYIEYKDHIKDMIKYYGILDPPLIANGLITLIEDDALNGAIMKITTSKGIHFQDYDATPFQAKSQ</sequence>
<comment type="function">
    <text evidence="2">Catalyzes the NAD-dependent dehydrogenation (oxidation) of a broad array of hydroxylated polyunsaturated fatty acids (mainly eicosanoids and docosanoids, including prostaglandins, lipoxins and resolvins), yielding their corresponding keto (oxo) metabolites. Decreases the levels of the pro-proliferative prostaglandins such as prostaglandin E2 (whose activity is increased in cancer because of an increase in the expression of cyclooxygenase 2) and generates oxo-fatty acid products that can profoundly influence cell function by abrogating pro-inflammatory cytokine expression. Converts resolvins E1, D1 and D2 to their oxo products, which represents a mode of resolvin inactivation. Resolvin E1 plays important roles during the resolution phase of acute inflammation, while resolvins D1 and D2 have a unique role in obesity-induced adipose inflammation.</text>
</comment>
<comment type="catalytic activity">
    <reaction evidence="2">
        <text>prostaglandin E2 + NAD(+) = 15-oxoprostaglandin E2 + NADH + H(+)</text>
        <dbReference type="Rhea" id="RHEA:11876"/>
        <dbReference type="ChEBI" id="CHEBI:15378"/>
        <dbReference type="ChEBI" id="CHEBI:57400"/>
        <dbReference type="ChEBI" id="CHEBI:57540"/>
        <dbReference type="ChEBI" id="CHEBI:57945"/>
        <dbReference type="ChEBI" id="CHEBI:606564"/>
        <dbReference type="EC" id="1.1.1.141"/>
    </reaction>
    <physiologicalReaction direction="left-to-right" evidence="2">
        <dbReference type="Rhea" id="RHEA:11877"/>
    </physiologicalReaction>
</comment>
<comment type="catalytic activity">
    <reaction evidence="2">
        <text>(15S)-hydroxy-(5Z,8Z,11Z,13E)-eicosatetraenoate + NAD(+) = 15-oxo-(5Z,8Z,11Z,13E)-eicosatetraenoate + NADH + H(+)</text>
        <dbReference type="Rhea" id="RHEA:23260"/>
        <dbReference type="ChEBI" id="CHEBI:15378"/>
        <dbReference type="ChEBI" id="CHEBI:57409"/>
        <dbReference type="ChEBI" id="CHEBI:57410"/>
        <dbReference type="ChEBI" id="CHEBI:57540"/>
        <dbReference type="ChEBI" id="CHEBI:57945"/>
        <dbReference type="EC" id="1.1.1.232"/>
    </reaction>
    <physiologicalReaction direction="left-to-right" evidence="2">
        <dbReference type="Rhea" id="RHEA:23261"/>
    </physiologicalReaction>
</comment>
<comment type="catalytic activity">
    <reaction evidence="2">
        <text>(11R)-hydroxy-(5Z,8Z,12E,14Z)-eicosatetraenoate + NAD(+) = 11-oxo-(5Z,8Z,12E,14Z)-eicosatetraenoate + NADH + H(+)</text>
        <dbReference type="Rhea" id="RHEA:48640"/>
        <dbReference type="ChEBI" id="CHEBI:15378"/>
        <dbReference type="ChEBI" id="CHEBI:57540"/>
        <dbReference type="ChEBI" id="CHEBI:57945"/>
        <dbReference type="ChEBI" id="CHEBI:78836"/>
        <dbReference type="ChEBI" id="CHEBI:90697"/>
    </reaction>
    <physiologicalReaction direction="left-to-right" evidence="2">
        <dbReference type="Rhea" id="RHEA:48641"/>
    </physiologicalReaction>
</comment>
<comment type="catalytic activity">
    <reaction evidence="2">
        <text>lipoxin A4 + NAD(+) = 15-oxo-(5S,6R)-dihydroxy-(7E,9E,11Z,13E)-eicosatetraenoate + NADH + H(+)</text>
        <dbReference type="Rhea" id="RHEA:41572"/>
        <dbReference type="ChEBI" id="CHEBI:15378"/>
        <dbReference type="ChEBI" id="CHEBI:57540"/>
        <dbReference type="ChEBI" id="CHEBI:57945"/>
        <dbReference type="ChEBI" id="CHEBI:67026"/>
        <dbReference type="ChEBI" id="CHEBI:78311"/>
    </reaction>
    <physiologicalReaction direction="left-to-right" evidence="2">
        <dbReference type="Rhea" id="RHEA:41573"/>
    </physiologicalReaction>
</comment>
<comment type="catalytic activity">
    <reaction evidence="2">
        <text>15-oxo-(5S,6R)-dihydroxy-(7E,9E,11Z)-eicosatrienoate + NADH + H(+) = (5S,6R,15S)-trihydroxy-(7E,9E,11Z)-eicosatrienoate + NAD(+)</text>
        <dbReference type="Rhea" id="RHEA:41596"/>
        <dbReference type="ChEBI" id="CHEBI:15378"/>
        <dbReference type="ChEBI" id="CHEBI:57540"/>
        <dbReference type="ChEBI" id="CHEBI:57945"/>
        <dbReference type="ChEBI" id="CHEBI:78325"/>
        <dbReference type="ChEBI" id="CHEBI:78329"/>
    </reaction>
    <physiologicalReaction direction="left-to-right" evidence="2">
        <dbReference type="Rhea" id="RHEA:41597"/>
    </physiologicalReaction>
</comment>
<comment type="catalytic activity">
    <reaction evidence="2">
        <text>prostaglandin A1 + NAD(+) = 15-oxo-prostaglandin A1 + NADH + H(+)</text>
        <dbReference type="Rhea" id="RHEA:41263"/>
        <dbReference type="ChEBI" id="CHEBI:15378"/>
        <dbReference type="ChEBI" id="CHEBI:57398"/>
        <dbReference type="ChEBI" id="CHEBI:57540"/>
        <dbReference type="ChEBI" id="CHEBI:57945"/>
        <dbReference type="ChEBI" id="CHEBI:85072"/>
    </reaction>
    <physiologicalReaction direction="left-to-right" evidence="2">
        <dbReference type="Rhea" id="RHEA:41264"/>
    </physiologicalReaction>
</comment>
<comment type="catalytic activity">
    <reaction evidence="2">
        <text>prostaglandin E1 + NAD(+) = 15-oxoprostaglandin E1 + NADH + H(+)</text>
        <dbReference type="Rhea" id="RHEA:16477"/>
        <dbReference type="ChEBI" id="CHEBI:15378"/>
        <dbReference type="ChEBI" id="CHEBI:57397"/>
        <dbReference type="ChEBI" id="CHEBI:57401"/>
        <dbReference type="ChEBI" id="CHEBI:57540"/>
        <dbReference type="ChEBI" id="CHEBI:57945"/>
    </reaction>
    <physiologicalReaction direction="left-to-right" evidence="2">
        <dbReference type="Rhea" id="RHEA:16478"/>
    </physiologicalReaction>
</comment>
<comment type="catalytic activity">
    <reaction evidence="2">
        <text>14-hydroxy-(4Z,7Z,10Z,12E,16Z,19Z)-docosahexaenoate + NAD(+) = 14-oxo-(4Z,7Z,10Z,12E,16Z,19Z)-docosahexaenoate + NADH + H(+)</text>
        <dbReference type="Rhea" id="RHEA:48952"/>
        <dbReference type="ChEBI" id="CHEBI:15378"/>
        <dbReference type="ChEBI" id="CHEBI:57540"/>
        <dbReference type="ChEBI" id="CHEBI:57945"/>
        <dbReference type="ChEBI" id="CHEBI:90866"/>
        <dbReference type="ChEBI" id="CHEBI:90867"/>
    </reaction>
    <physiologicalReaction direction="left-to-right" evidence="2">
        <dbReference type="Rhea" id="RHEA:48953"/>
    </physiologicalReaction>
</comment>
<comment type="catalytic activity">
    <reaction evidence="2">
        <text>resolvin E1 + NAD(+) = 18-oxo-resolvin E1 + NADH + H(+)</text>
        <dbReference type="Rhea" id="RHEA:49244"/>
        <dbReference type="ChEBI" id="CHEBI:15378"/>
        <dbReference type="ChEBI" id="CHEBI:57540"/>
        <dbReference type="ChEBI" id="CHEBI:57945"/>
        <dbReference type="ChEBI" id="CHEBI:91000"/>
        <dbReference type="ChEBI" id="CHEBI:91001"/>
    </reaction>
    <physiologicalReaction direction="left-to-right" evidence="2">
        <dbReference type="Rhea" id="RHEA:49245"/>
    </physiologicalReaction>
</comment>
<comment type="catalytic activity">
    <reaction evidence="2">
        <text>resolvin D1 + NAD(+) = 8-oxoresolvin D1 + NADH + H(+)</text>
        <dbReference type="Rhea" id="RHEA:50124"/>
        <dbReference type="ChEBI" id="CHEBI:15378"/>
        <dbReference type="ChEBI" id="CHEBI:57540"/>
        <dbReference type="ChEBI" id="CHEBI:57945"/>
        <dbReference type="ChEBI" id="CHEBI:132079"/>
        <dbReference type="ChEBI" id="CHEBI:132080"/>
    </reaction>
    <physiologicalReaction direction="left-to-right" evidence="2">
        <dbReference type="Rhea" id="RHEA:50125"/>
    </physiologicalReaction>
</comment>
<comment type="catalytic activity">
    <reaction evidence="2">
        <text>resolvin D1 + NAD(+) = 17-oxoresolvin D1 + NADH + H(+)</text>
        <dbReference type="Rhea" id="RHEA:50128"/>
        <dbReference type="ChEBI" id="CHEBI:15378"/>
        <dbReference type="ChEBI" id="CHEBI:57540"/>
        <dbReference type="ChEBI" id="CHEBI:57945"/>
        <dbReference type="ChEBI" id="CHEBI:132079"/>
        <dbReference type="ChEBI" id="CHEBI:132081"/>
    </reaction>
    <physiologicalReaction direction="left-to-right" evidence="2">
        <dbReference type="Rhea" id="RHEA:50129"/>
    </physiologicalReaction>
</comment>
<comment type="catalytic activity">
    <reaction evidence="2">
        <text>resolvin D2 + NAD(+) = 7-oxoresolvin D2 + NADH + H(+)</text>
        <dbReference type="Rhea" id="RHEA:53584"/>
        <dbReference type="ChEBI" id="CHEBI:15378"/>
        <dbReference type="ChEBI" id="CHEBI:57540"/>
        <dbReference type="ChEBI" id="CHEBI:57945"/>
        <dbReference type="ChEBI" id="CHEBI:133367"/>
        <dbReference type="ChEBI" id="CHEBI:137497"/>
    </reaction>
    <physiologicalReaction direction="left-to-right" evidence="2">
        <dbReference type="Rhea" id="RHEA:53585"/>
    </physiologicalReaction>
</comment>
<comment type="catalytic activity">
    <reaction evidence="2">
        <text>resolvin D2 + NAD(+) = 16-oxoresolvin D2 + NADH + H(+)</text>
        <dbReference type="Rhea" id="RHEA:53588"/>
        <dbReference type="ChEBI" id="CHEBI:15378"/>
        <dbReference type="ChEBI" id="CHEBI:57540"/>
        <dbReference type="ChEBI" id="CHEBI:57945"/>
        <dbReference type="ChEBI" id="CHEBI:133367"/>
        <dbReference type="ChEBI" id="CHEBI:137498"/>
    </reaction>
    <physiologicalReaction direction="left-to-right" evidence="2">
        <dbReference type="Rhea" id="RHEA:53589"/>
    </physiologicalReaction>
</comment>
<comment type="subunit">
    <text evidence="1">Homodimer.</text>
</comment>
<comment type="subcellular location">
    <subcellularLocation>
        <location evidence="1">Cytoplasm</location>
    </subcellularLocation>
</comment>
<comment type="similarity">
    <text evidence="4">Belongs to the short-chain dehydrogenases/reductases (SDR) family.</text>
</comment>
<reference key="1">
    <citation type="submission" date="2001-04" db="EMBL/GenBank/DDBJ databases">
        <title>Cloning of prostaglandin dehydrogenase type I cDNA from monkey.</title>
        <authorList>
            <person name="Fujimori K."/>
            <person name="Okada T."/>
            <person name="Habe T."/>
            <person name="Osama H."/>
            <person name="Urade Y."/>
        </authorList>
    </citation>
    <scope>NUCLEOTIDE SEQUENCE [MRNA]</scope>
    <source>
        <tissue>Lung</tissue>
    </source>
</reference>